<dbReference type="EC" id="2.4.1.109" evidence="5 14"/>
<dbReference type="EMBL" id="AF105020">
    <property type="protein sequence ID" value="AAF14118.1"/>
    <property type="molecule type" value="mRNA"/>
</dbReference>
<dbReference type="EMBL" id="AY090480">
    <property type="protein sequence ID" value="AAM12046.1"/>
    <property type="molecule type" value="mRNA"/>
</dbReference>
<dbReference type="EMBL" id="BX248027">
    <property type="protein sequence ID" value="CAD62348.1"/>
    <property type="status" value="ALT_SEQ"/>
    <property type="molecule type" value="mRNA"/>
</dbReference>
<dbReference type="EMBL" id="AC007954">
    <property type="protein sequence ID" value="AAF62558.1"/>
    <property type="molecule type" value="Genomic_DNA"/>
</dbReference>
<dbReference type="EMBL" id="AC007375">
    <property type="protein sequence ID" value="AAF63184.1"/>
    <property type="molecule type" value="Genomic_DNA"/>
</dbReference>
<dbReference type="EMBL" id="BC031651">
    <property type="protein sequence ID" value="AAH31651.1"/>
    <property type="molecule type" value="mRNA"/>
</dbReference>
<dbReference type="EMBL" id="AL353956">
    <property type="protein sequence ID" value="CAB89256.1"/>
    <property type="molecule type" value="mRNA"/>
</dbReference>
<dbReference type="CCDS" id="CCDS9857.1">
    <molecule id="Q9UKY4-1"/>
</dbReference>
<dbReference type="PIR" id="T48691">
    <property type="entry name" value="T48691"/>
</dbReference>
<dbReference type="RefSeq" id="NP_037514.2">
    <molecule id="Q9UKY4-1"/>
    <property type="nucleotide sequence ID" value="NM_013382.5"/>
</dbReference>
<dbReference type="SMR" id="Q9UKY4"/>
<dbReference type="BioGRID" id="118991">
    <property type="interactions" value="57"/>
</dbReference>
<dbReference type="ComplexPortal" id="CPX-2659">
    <property type="entry name" value="POMT1-POMT2 O-mannosyltransferase complex"/>
</dbReference>
<dbReference type="FunCoup" id="Q9UKY4">
    <property type="interactions" value="2647"/>
</dbReference>
<dbReference type="IntAct" id="Q9UKY4">
    <property type="interactions" value="44"/>
</dbReference>
<dbReference type="STRING" id="9606.ENSP00000261534"/>
<dbReference type="CAZy" id="GT39">
    <property type="family name" value="Glycosyltransferase Family 39"/>
</dbReference>
<dbReference type="GlyConnect" id="1665">
    <property type="glycosylation" value="2 N-Linked glycans (2 sites)"/>
</dbReference>
<dbReference type="GlyCosmos" id="Q9UKY4">
    <property type="glycosylation" value="5 sites, 2 glycans"/>
</dbReference>
<dbReference type="GlyGen" id="Q9UKY4">
    <property type="glycosylation" value="6 sites, 9 N-linked glycans (5 sites), 1 O-linked glycan (1 site)"/>
</dbReference>
<dbReference type="iPTMnet" id="Q9UKY4"/>
<dbReference type="PhosphoSitePlus" id="Q9UKY4"/>
<dbReference type="BioMuta" id="POMT2"/>
<dbReference type="DMDM" id="32171723"/>
<dbReference type="jPOST" id="Q9UKY4"/>
<dbReference type="MassIVE" id="Q9UKY4"/>
<dbReference type="PaxDb" id="9606-ENSP00000261534"/>
<dbReference type="PeptideAtlas" id="Q9UKY4"/>
<dbReference type="ProteomicsDB" id="84912">
    <molecule id="Q9UKY4-1"/>
</dbReference>
<dbReference type="ProteomicsDB" id="84913">
    <molecule id="Q9UKY4-2"/>
</dbReference>
<dbReference type="Pumba" id="Q9UKY4"/>
<dbReference type="Antibodypedia" id="67">
    <property type="antibodies" value="138 antibodies from 23 providers"/>
</dbReference>
<dbReference type="DNASU" id="29954"/>
<dbReference type="Ensembl" id="ENST00000261534.9">
    <molecule id="Q9UKY4-1"/>
    <property type="protein sequence ID" value="ENSP00000261534.4"/>
    <property type="gene ID" value="ENSG00000009830.13"/>
</dbReference>
<dbReference type="Ensembl" id="ENST00000556326.5">
    <molecule id="Q9UKY4-2"/>
    <property type="protein sequence ID" value="ENSP00000450630.1"/>
    <property type="gene ID" value="ENSG00000009830.13"/>
</dbReference>
<dbReference type="GeneID" id="29954"/>
<dbReference type="KEGG" id="hsa:29954"/>
<dbReference type="MANE-Select" id="ENST00000261534.9">
    <property type="protein sequence ID" value="ENSP00000261534.4"/>
    <property type="RefSeq nucleotide sequence ID" value="NM_013382.7"/>
    <property type="RefSeq protein sequence ID" value="NP_037514.2"/>
</dbReference>
<dbReference type="UCSC" id="uc001xti.3">
    <molecule id="Q9UKY4-1"/>
    <property type="organism name" value="human"/>
</dbReference>
<dbReference type="AGR" id="HGNC:19743"/>
<dbReference type="CTD" id="29954"/>
<dbReference type="DisGeNET" id="29954"/>
<dbReference type="GeneCards" id="POMT2"/>
<dbReference type="HGNC" id="HGNC:19743">
    <property type="gene designation" value="POMT2"/>
</dbReference>
<dbReference type="HPA" id="ENSG00000009830">
    <property type="expression patterns" value="Tissue enhanced (testis)"/>
</dbReference>
<dbReference type="MalaCards" id="POMT2"/>
<dbReference type="MIM" id="607439">
    <property type="type" value="gene"/>
</dbReference>
<dbReference type="MIM" id="613150">
    <property type="type" value="phenotype"/>
</dbReference>
<dbReference type="MIM" id="613156">
    <property type="type" value="phenotype"/>
</dbReference>
<dbReference type="MIM" id="613158">
    <property type="type" value="phenotype"/>
</dbReference>
<dbReference type="neXtProt" id="NX_Q9UKY4"/>
<dbReference type="OpenTargets" id="ENSG00000009830"/>
<dbReference type="Orphanet" id="370959">
    <property type="disease" value="Congenital muscular dystrophy with cerebellar involvement"/>
</dbReference>
<dbReference type="Orphanet" id="370968">
    <property type="disease" value="Congenital muscular dystrophy with intellectual disability"/>
</dbReference>
<dbReference type="Orphanet" id="588">
    <property type="disease" value="Muscle-eye-brain disease"/>
</dbReference>
<dbReference type="Orphanet" id="206559">
    <property type="disease" value="POMT2-related limb-girdle muscular dystrophy R14"/>
</dbReference>
<dbReference type="Orphanet" id="899">
    <property type="disease" value="Walker-Warburg syndrome"/>
</dbReference>
<dbReference type="PharmGKB" id="PA134980627"/>
<dbReference type="VEuPathDB" id="HostDB:ENSG00000009830"/>
<dbReference type="eggNOG" id="KOG3359">
    <property type="taxonomic scope" value="Eukaryota"/>
</dbReference>
<dbReference type="GeneTree" id="ENSGT00940000156829"/>
<dbReference type="HOGENOM" id="CLU_008438_5_1_1"/>
<dbReference type="InParanoid" id="Q9UKY4"/>
<dbReference type="OMA" id="MCGWDDN"/>
<dbReference type="OrthoDB" id="5561486at2759"/>
<dbReference type="PAN-GO" id="Q9UKY4">
    <property type="GO annotations" value="3 GO annotations based on evolutionary models"/>
</dbReference>
<dbReference type="PhylomeDB" id="Q9UKY4"/>
<dbReference type="TreeFam" id="TF300552"/>
<dbReference type="BioCyc" id="MetaCyc:HS00268-MONOMER"/>
<dbReference type="BRENDA" id="2.4.1.109">
    <property type="organism ID" value="2681"/>
</dbReference>
<dbReference type="PathwayCommons" id="Q9UKY4"/>
<dbReference type="Reactome" id="R-HSA-5083629">
    <property type="pathway name" value="Defective POMT2 causes MDDGA2, MDDGB2 and MDDGC2"/>
</dbReference>
<dbReference type="Reactome" id="R-HSA-5083633">
    <property type="pathway name" value="Defective POMT1 causes MDDGA1, MDDGB1 and MDDGC1"/>
</dbReference>
<dbReference type="Reactome" id="R-HSA-5173105">
    <property type="pathway name" value="O-linked glycosylation"/>
</dbReference>
<dbReference type="SignaLink" id="Q9UKY4"/>
<dbReference type="SIGNOR" id="Q9UKY4"/>
<dbReference type="UniPathway" id="UPA00378"/>
<dbReference type="BioGRID-ORCS" id="29954">
    <property type="hits" value="13 hits in 1158 CRISPR screens"/>
</dbReference>
<dbReference type="ChiTaRS" id="POMT2">
    <property type="organism name" value="human"/>
</dbReference>
<dbReference type="GeneWiki" id="POMT2"/>
<dbReference type="GenomeRNAi" id="29954"/>
<dbReference type="Pharos" id="Q9UKY4">
    <property type="development level" value="Tbio"/>
</dbReference>
<dbReference type="PRO" id="PR:Q9UKY4"/>
<dbReference type="Proteomes" id="UP000005640">
    <property type="component" value="Chromosome 14"/>
</dbReference>
<dbReference type="RNAct" id="Q9UKY4">
    <property type="molecule type" value="protein"/>
</dbReference>
<dbReference type="Bgee" id="ENSG00000009830">
    <property type="expression patterns" value="Expressed in right testis and 145 other cell types or tissues"/>
</dbReference>
<dbReference type="ExpressionAtlas" id="Q9UKY4">
    <property type="expression patterns" value="baseline and differential"/>
</dbReference>
<dbReference type="GO" id="GO:0005829">
    <property type="term" value="C:cytosol"/>
    <property type="evidence" value="ECO:0000314"/>
    <property type="project" value="HPA"/>
</dbReference>
<dbReference type="GO" id="GO:0005783">
    <property type="term" value="C:endoplasmic reticulum"/>
    <property type="evidence" value="ECO:0000318"/>
    <property type="project" value="GO_Central"/>
</dbReference>
<dbReference type="GO" id="GO:0005789">
    <property type="term" value="C:endoplasmic reticulum membrane"/>
    <property type="evidence" value="ECO:0000304"/>
    <property type="project" value="Reactome"/>
</dbReference>
<dbReference type="GO" id="GO:0005730">
    <property type="term" value="C:nucleolus"/>
    <property type="evidence" value="ECO:0000314"/>
    <property type="project" value="HPA"/>
</dbReference>
<dbReference type="GO" id="GO:0005654">
    <property type="term" value="C:nucleoplasm"/>
    <property type="evidence" value="ECO:0000314"/>
    <property type="project" value="HPA"/>
</dbReference>
<dbReference type="GO" id="GO:0004169">
    <property type="term" value="F:dolichyl-phosphate-mannose-protein mannosyltransferase activity"/>
    <property type="evidence" value="ECO:0000318"/>
    <property type="project" value="GO_Central"/>
</dbReference>
<dbReference type="GO" id="GO:0000030">
    <property type="term" value="F:mannosyltransferase activity"/>
    <property type="evidence" value="ECO:0000315"/>
    <property type="project" value="UniProtKB"/>
</dbReference>
<dbReference type="GO" id="GO:0046872">
    <property type="term" value="F:metal ion binding"/>
    <property type="evidence" value="ECO:0007669"/>
    <property type="project" value="UniProtKB-KW"/>
</dbReference>
<dbReference type="GO" id="GO:0071711">
    <property type="term" value="P:basement membrane organization"/>
    <property type="evidence" value="ECO:0007669"/>
    <property type="project" value="Ensembl"/>
</dbReference>
<dbReference type="GO" id="GO:0021542">
    <property type="term" value="P:dentate gyrus development"/>
    <property type="evidence" value="ECO:0007669"/>
    <property type="project" value="Ensembl"/>
</dbReference>
<dbReference type="GO" id="GO:0035269">
    <property type="term" value="P:protein O-linked mannosylation"/>
    <property type="evidence" value="ECO:0000315"/>
    <property type="project" value="UniProtKB"/>
</dbReference>
<dbReference type="GO" id="GO:0150103">
    <property type="term" value="P:reactive gliosis"/>
    <property type="evidence" value="ECO:0007669"/>
    <property type="project" value="Ensembl"/>
</dbReference>
<dbReference type="CDD" id="cd23282">
    <property type="entry name" value="beta-trefoil_MIR_POMT2"/>
    <property type="match status" value="1"/>
</dbReference>
<dbReference type="FunFam" id="2.80.10.50:FF:000026">
    <property type="entry name" value="Blast:Protein O-mannosyl-transferase 2"/>
    <property type="match status" value="1"/>
</dbReference>
<dbReference type="Gene3D" id="2.80.10.50">
    <property type="match status" value="1"/>
</dbReference>
<dbReference type="InterPro" id="IPR027005">
    <property type="entry name" value="GlyclTrfase_39-like"/>
</dbReference>
<dbReference type="InterPro" id="IPR003342">
    <property type="entry name" value="Glyco_trans_39/83"/>
</dbReference>
<dbReference type="InterPro" id="IPR036300">
    <property type="entry name" value="MIR_dom_sf"/>
</dbReference>
<dbReference type="InterPro" id="IPR016093">
    <property type="entry name" value="MIR_motif"/>
</dbReference>
<dbReference type="InterPro" id="IPR032421">
    <property type="entry name" value="PMT_4TMC"/>
</dbReference>
<dbReference type="PANTHER" id="PTHR10050">
    <property type="entry name" value="DOLICHYL-PHOSPHATE-MANNOSE--PROTEIN MANNOSYLTRANSFERASE"/>
    <property type="match status" value="1"/>
</dbReference>
<dbReference type="PANTHER" id="PTHR10050:SF46">
    <property type="entry name" value="PROTEIN O-MANNOSYL-TRANSFERASE 2"/>
    <property type="match status" value="1"/>
</dbReference>
<dbReference type="Pfam" id="PF02815">
    <property type="entry name" value="MIR"/>
    <property type="match status" value="1"/>
</dbReference>
<dbReference type="Pfam" id="PF02366">
    <property type="entry name" value="PMT"/>
    <property type="match status" value="1"/>
</dbReference>
<dbReference type="Pfam" id="PF16192">
    <property type="entry name" value="PMT_4TMC"/>
    <property type="match status" value="1"/>
</dbReference>
<dbReference type="SMART" id="SM00472">
    <property type="entry name" value="MIR"/>
    <property type="match status" value="3"/>
</dbReference>
<dbReference type="SUPFAM" id="SSF82109">
    <property type="entry name" value="MIR domain"/>
    <property type="match status" value="1"/>
</dbReference>
<dbReference type="PROSITE" id="PS50919">
    <property type="entry name" value="MIR"/>
    <property type="match status" value="3"/>
</dbReference>
<reference key="1">
    <citation type="journal article" date="2002" name="Glycobiology">
        <title>Characterization of POMT2, a novel member of the PMT protein O-mannosyltransferase family specifically localized to the acrosome of mammalian spermatids.</title>
        <authorList>
            <person name="Willer T."/>
            <person name="Amselgruber W."/>
            <person name="Deutzmann R."/>
            <person name="Strahl S."/>
        </authorList>
    </citation>
    <scope>NUCLEOTIDE SEQUENCE [GENOMIC DNA] (ISOFORM 1)</scope>
    <scope>GLYCOSYLATION</scope>
    <scope>SUBCELLULAR LOCATION</scope>
    <source>
        <tissue>Cerebellum</tissue>
    </source>
</reference>
<reference key="2">
    <citation type="submission" date="2003-02" db="EMBL/GenBank/DDBJ databases">
        <title>Full-length cDNA libraries and normalization.</title>
        <authorList>
            <person name="Li W.B."/>
            <person name="Gruber C."/>
            <person name="Jessee J."/>
            <person name="Polayes D."/>
        </authorList>
    </citation>
    <scope>NUCLEOTIDE SEQUENCE [LARGE SCALE MRNA] (ISOFORM 2)</scope>
    <source>
        <tissue>Neuroblastoma</tissue>
    </source>
</reference>
<reference key="3">
    <citation type="journal article" date="2003" name="Nature">
        <title>The DNA sequence and analysis of human chromosome 14.</title>
        <authorList>
            <person name="Heilig R."/>
            <person name="Eckenberg R."/>
            <person name="Petit J.-L."/>
            <person name="Fonknechten N."/>
            <person name="Da Silva C."/>
            <person name="Cattolico L."/>
            <person name="Levy M."/>
            <person name="Barbe V."/>
            <person name="De Berardinis V."/>
            <person name="Ureta-Vidal A."/>
            <person name="Pelletier E."/>
            <person name="Vico V."/>
            <person name="Anthouard V."/>
            <person name="Rowen L."/>
            <person name="Madan A."/>
            <person name="Qin S."/>
            <person name="Sun H."/>
            <person name="Du H."/>
            <person name="Pepin K."/>
            <person name="Artiguenave F."/>
            <person name="Robert C."/>
            <person name="Cruaud C."/>
            <person name="Bruels T."/>
            <person name="Jaillon O."/>
            <person name="Friedlander L."/>
            <person name="Samson G."/>
            <person name="Brottier P."/>
            <person name="Cure S."/>
            <person name="Segurens B."/>
            <person name="Aniere F."/>
            <person name="Samain S."/>
            <person name="Crespeau H."/>
            <person name="Abbasi N."/>
            <person name="Aiach N."/>
            <person name="Boscus D."/>
            <person name="Dickhoff R."/>
            <person name="Dors M."/>
            <person name="Dubois I."/>
            <person name="Friedman C."/>
            <person name="Gouyvenoux M."/>
            <person name="James R."/>
            <person name="Madan A."/>
            <person name="Mairey-Estrada B."/>
            <person name="Mangenot S."/>
            <person name="Martins N."/>
            <person name="Menard M."/>
            <person name="Oztas S."/>
            <person name="Ratcliffe A."/>
            <person name="Shaffer T."/>
            <person name="Trask B."/>
            <person name="Vacherie B."/>
            <person name="Bellemere C."/>
            <person name="Belser C."/>
            <person name="Besnard-Gonnet M."/>
            <person name="Bartol-Mavel D."/>
            <person name="Boutard M."/>
            <person name="Briez-Silla S."/>
            <person name="Combette S."/>
            <person name="Dufosse-Laurent V."/>
            <person name="Ferron C."/>
            <person name="Lechaplais C."/>
            <person name="Louesse C."/>
            <person name="Muselet D."/>
            <person name="Magdelenat G."/>
            <person name="Pateau E."/>
            <person name="Petit E."/>
            <person name="Sirvain-Trukniewicz P."/>
            <person name="Trybou A."/>
            <person name="Vega-Czarny N."/>
            <person name="Bataille E."/>
            <person name="Bluet E."/>
            <person name="Bordelais I."/>
            <person name="Dubois M."/>
            <person name="Dumont C."/>
            <person name="Guerin T."/>
            <person name="Haffray S."/>
            <person name="Hammadi R."/>
            <person name="Muanga J."/>
            <person name="Pellouin V."/>
            <person name="Robert D."/>
            <person name="Wunderle E."/>
            <person name="Gauguet G."/>
            <person name="Roy A."/>
            <person name="Sainte-Marthe L."/>
            <person name="Verdier J."/>
            <person name="Verdier-Discala C."/>
            <person name="Hillier L.W."/>
            <person name="Fulton L."/>
            <person name="McPherson J."/>
            <person name="Matsuda F."/>
            <person name="Wilson R."/>
            <person name="Scarpelli C."/>
            <person name="Gyapay G."/>
            <person name="Wincker P."/>
            <person name="Saurin W."/>
            <person name="Quetier F."/>
            <person name="Waterston R."/>
            <person name="Hood L."/>
            <person name="Weissenbach J."/>
        </authorList>
    </citation>
    <scope>NUCLEOTIDE SEQUENCE [LARGE SCALE GENOMIC DNA]</scope>
</reference>
<reference key="4">
    <citation type="journal article" date="2004" name="Genome Res.">
        <title>The status, quality, and expansion of the NIH full-length cDNA project: the Mammalian Gene Collection (MGC).</title>
        <authorList>
            <consortium name="The MGC Project Team"/>
        </authorList>
    </citation>
    <scope>NUCLEOTIDE SEQUENCE [LARGE SCALE MRNA] (ISOFORM 1)</scope>
    <source>
        <tissue>Brain</tissue>
    </source>
</reference>
<reference key="5">
    <citation type="journal article" date="2007" name="BMC Genomics">
        <title>The full-ORF clone resource of the German cDNA consortium.</title>
        <authorList>
            <person name="Bechtel S."/>
            <person name="Rosenfelder H."/>
            <person name="Duda A."/>
            <person name="Schmidt C.P."/>
            <person name="Ernst U."/>
            <person name="Wellenreuther R."/>
            <person name="Mehrle A."/>
            <person name="Schuster C."/>
            <person name="Bahr A."/>
            <person name="Bloecker H."/>
            <person name="Heubner D."/>
            <person name="Hoerlein A."/>
            <person name="Michel G."/>
            <person name="Wedler H."/>
            <person name="Koehrer K."/>
            <person name="Ottenwaelder B."/>
            <person name="Poustka A."/>
            <person name="Wiemann S."/>
            <person name="Schupp I."/>
        </authorList>
    </citation>
    <scope>NUCLEOTIDE SEQUENCE [LARGE SCALE MRNA] OF 612-750</scope>
    <source>
        <tissue>Testis</tissue>
    </source>
</reference>
<reference key="6">
    <citation type="journal article" date="2004" name="Proc. Natl. Acad. Sci. U.S.A.">
        <title>Demonstration of mammalian protein O-mannosyltransferase activity: coexpression of POMT1 and POMT2 required for enzymatic activity.</title>
        <authorList>
            <person name="Manya H."/>
            <person name="Chiba A."/>
            <person name="Yoshida A."/>
            <person name="Wang X."/>
            <person name="Chiba Y."/>
            <person name="Jigami Y."/>
            <person name="Margolis R.U."/>
            <person name="Endo T."/>
        </authorList>
    </citation>
    <scope>FUNCTION</scope>
    <scope>CATALYTIC ACTIVITY</scope>
    <scope>ACTIVITY REGULATION</scope>
    <scope>SUBCELLULAR LOCATION</scope>
</reference>
<reference key="7">
    <citation type="journal article" date="2017" name="J. Biol. Chem.">
        <title>Mammalian O-mannosylation of cadherins and plexins is independent of protein O-mannosyltransferases 1 and 2.</title>
        <authorList>
            <person name="Larsen I.S.B."/>
            <person name="Narimatsu Y."/>
            <person name="Joshi H.J."/>
            <person name="Yang Z."/>
            <person name="Harrison O.J."/>
            <person name="Brasch J."/>
            <person name="Shapiro L."/>
            <person name="Honig B."/>
            <person name="Vakhrushev S.Y."/>
            <person name="Clausen H."/>
            <person name="Halim A."/>
        </authorList>
    </citation>
    <scope>FUNCTION</scope>
    <scope>CATALYTIC ACTIVITY</scope>
</reference>
<reference key="8">
    <citation type="journal article" date="2005" name="J. Med. Genet.">
        <title>POMT2 mutations cause alpha-dystroglycan hypoglycosylation and Walker-Warburg syndrome.</title>
        <authorList>
            <person name="van Reeuwijk J."/>
            <person name="Janssen M."/>
            <person name="van den Elzen C."/>
            <person name="Beltran-Valero de Bernabe D."/>
            <person name="Sabatelli P."/>
            <person name="Merlini L."/>
            <person name="Boon M."/>
            <person name="Scheffer H."/>
            <person name="Brockington M."/>
            <person name="Muntoni F."/>
            <person name="Huynen M.A."/>
            <person name="Verrips A."/>
            <person name="Walsh C.A."/>
            <person name="Barth P.G."/>
            <person name="Brunner H.G."/>
            <person name="van Bokhoven H."/>
        </authorList>
    </citation>
    <scope>INVOLVEMENT IN MDDGA2</scope>
</reference>
<reference key="9">
    <citation type="journal article" date="2013" name="J. Proteome Res.">
        <title>Toward a comprehensive characterization of a human cancer cell phosphoproteome.</title>
        <authorList>
            <person name="Zhou H."/>
            <person name="Di Palma S."/>
            <person name="Preisinger C."/>
            <person name="Peng M."/>
            <person name="Polat A.N."/>
            <person name="Heck A.J."/>
            <person name="Mohammed S."/>
        </authorList>
    </citation>
    <scope>PHOSPHORYLATION [LARGE SCALE ANALYSIS] AT SER-41</scope>
    <scope>IDENTIFICATION BY MASS SPECTROMETRY [LARGE SCALE ANALYSIS]</scope>
    <source>
        <tissue>Cervix carcinoma</tissue>
        <tissue>Erythroleukemia</tissue>
    </source>
</reference>
<reference key="10">
    <citation type="journal article" date="2006" name="Neuromuscul. Disord.">
        <title>POMT2 mutation in a patient with 'MEB-like' phenotype.</title>
        <authorList>
            <person name="Mercuri E."/>
            <person name="D'Amico A."/>
            <person name="Tessa A."/>
            <person name="Berardinelli A."/>
            <person name="Pane M."/>
            <person name="Messina S."/>
            <person name="van Reeuwijk J."/>
            <person name="Bertini E."/>
            <person name="Muntoni F."/>
            <person name="Santorelli F.M."/>
        </authorList>
    </citation>
    <scope>VARIANTS MDDGA2 SER-353 AND GLU-726</scope>
</reference>
<reference key="11">
    <citation type="journal article" date="2007" name="Biochem. Biophys. Res. Commun.">
        <title>POMT2 gene mutation in limb-girdle muscular dystrophy with inflammatory changes.</title>
        <authorList>
            <person name="Biancheri R."/>
            <person name="Falace A."/>
            <person name="Tessa A."/>
            <person name="Pedemonte M."/>
            <person name="Scapolan S."/>
            <person name="Cassandrini D."/>
            <person name="Aiello C."/>
            <person name="Rossi A."/>
            <person name="Broda P."/>
            <person name="Zara F."/>
            <person name="Santorelli F.M."/>
            <person name="Minetti C."/>
            <person name="Bruno C."/>
        </authorList>
    </citation>
    <scope>VARIANT MDDGC2 MET-184</scope>
</reference>
<reference key="12">
    <citation type="journal article" date="2007" name="Brain">
        <title>Refining genotype phenotype correlations in muscular dystrophies with defective glycosylation of dystroglycan.</title>
        <authorList>
            <person name="Godfrey C."/>
            <person name="Clement E."/>
            <person name="Mein R."/>
            <person name="Brockington M."/>
            <person name="Smith J."/>
            <person name="Talim B."/>
            <person name="Straub V."/>
            <person name="Robb S."/>
            <person name="Quinlivan R."/>
            <person name="Feng L."/>
            <person name="Jimenez-Mallebrera C."/>
            <person name="Mercuri E."/>
            <person name="Manzur A.Y."/>
            <person name="Kinali M."/>
            <person name="Torelli S."/>
            <person name="Brown S.C."/>
            <person name="Sewry C.A."/>
            <person name="Bushby K."/>
            <person name="Topaloglu H."/>
            <person name="North K."/>
            <person name="Abbs S."/>
            <person name="Muntoni F."/>
        </authorList>
    </citation>
    <scope>VARIANTS MDDGA2 ASN-198; PHE-373; PRO-413 AND CYS-666</scope>
    <scope>VARIANTS MDDGC2 MET-184 AND SER-748</scope>
</reference>
<reference key="13">
    <citation type="journal article" date="2007" name="Neurology">
        <title>New POMT2 mutations causing congenital muscular dystrophy: identification of a founder mutation.</title>
        <authorList>
            <person name="Yanagisawa A."/>
            <person name="Bouchet C."/>
            <person name="Van den Bergh P.Y."/>
            <person name="Cuisset J.M."/>
            <person name="Viollet L."/>
            <person name="Leturcq F."/>
            <person name="Romero N.B."/>
            <person name="Quijano-Roy S."/>
            <person name="Fardeau M."/>
            <person name="Seta N."/>
            <person name="Guicheney P."/>
        </authorList>
    </citation>
    <scope>VARIANTS MDDGB2 CYS-666 AND ARG-748</scope>
</reference>
<reference key="14">
    <citation type="journal article" date="2009" name="Eur. J. Med. Genet.">
        <title>POMT2 intragenic deletions and splicing abnormalities causing congenital muscular dystrophy with mental retardation.</title>
        <authorList>
            <person name="Yanagisawa A."/>
            <person name="Bouchet C."/>
            <person name="Quijano-Roy S."/>
            <person name="Vuillaumier-Barrot S."/>
            <person name="Clarke N."/>
            <person name="Odent S."/>
            <person name="Rodriguez D."/>
            <person name="Romero N.B."/>
            <person name="Osawa M."/>
            <person name="Endo T."/>
            <person name="Taratuto A.L."/>
            <person name="Seta N."/>
            <person name="Guicheney P."/>
        </authorList>
    </citation>
    <scope>VARIANTS MDDGA2 VAL-482; 444-ILE-ASN-445 DELINS LEU-LEU-TRP-GLN AND CYS-666</scope>
</reference>
<reference key="15">
    <citation type="journal article" date="2009" name="Neurology">
        <title>Congenital muscular dystrophies with defective glycosylation of dystroglycan: a population study.</title>
        <authorList>
            <person name="Mercuri E."/>
            <person name="Messina S."/>
            <person name="Bruno C."/>
            <person name="Mora M."/>
            <person name="Pegoraro E."/>
            <person name="Comi G.P."/>
            <person name="D'Amico A."/>
            <person name="Aiello C."/>
            <person name="Biancheri R."/>
            <person name="Berardinelli A."/>
            <person name="Boffi P."/>
            <person name="Cassandrini D."/>
            <person name="Laverda A."/>
            <person name="Moggio M."/>
            <person name="Morandi L."/>
            <person name="Moroni I."/>
            <person name="Pane M."/>
            <person name="Pezzani R."/>
            <person name="Pichiecchio A."/>
            <person name="Pini A."/>
            <person name="Minetti C."/>
            <person name="Mongini T."/>
            <person name="Mottarelli E."/>
            <person name="Ricci E."/>
            <person name="Ruggieri A."/>
            <person name="Saredi S."/>
            <person name="Scuderi C."/>
            <person name="Tessa A."/>
            <person name="Toscano A."/>
            <person name="Tortorella G."/>
            <person name="Trevisan C.P."/>
            <person name="Uggetti C."/>
            <person name="Vasco G."/>
            <person name="Santorelli F.M."/>
            <person name="Bertini E."/>
        </authorList>
    </citation>
    <scope>VARIANTS MDDGB2 ASP-246; SER-353; CYS-666 AND GLU-726</scope>
</reference>
<reference key="16">
    <citation type="journal article" date="2012" name="Am. J. Hum. Genet.">
        <title>Exome sequencing and functional validation in zebrafish identify GTDC2 mutations as a cause of Walker-Warburg syndrome.</title>
        <authorList>
            <person name="Manzini M.C."/>
            <person name="Tambunan D.E."/>
            <person name="Hill R.S."/>
            <person name="Yu T.W."/>
            <person name="Maynard T.M."/>
            <person name="Heinzen E.L."/>
            <person name="Shianna K.V."/>
            <person name="Stevens C.R."/>
            <person name="Partlow J.N."/>
            <person name="Barry B.J."/>
            <person name="Rodriguez J."/>
            <person name="Gupta V.A."/>
            <person name="Al-Qudah A.K."/>
            <person name="Eyaid W.M."/>
            <person name="Friedman J.M."/>
            <person name="Salih M.A."/>
            <person name="Clark R."/>
            <person name="Moroni I."/>
            <person name="Mora M."/>
            <person name="Beggs A.H."/>
            <person name="Gabriel S.B."/>
            <person name="Walsh C.A."/>
        </authorList>
    </citation>
    <scope>VARIANT MDDGA2 ARG-478</scope>
</reference>
<keyword id="KW-0025">Alternative splicing</keyword>
<keyword id="KW-0912">Congenital muscular dystrophy</keyword>
<keyword id="KW-1215">Dystroglycanopathy</keyword>
<keyword id="KW-0256">Endoplasmic reticulum</keyword>
<keyword id="KW-0325">Glycoprotein</keyword>
<keyword id="KW-0328">Glycosyltransferase</keyword>
<keyword id="KW-0947">Limb-girdle muscular dystrophy</keyword>
<keyword id="KW-0451">Lissencephaly</keyword>
<keyword id="KW-0472">Membrane</keyword>
<keyword id="KW-0479">Metal-binding</keyword>
<keyword id="KW-0597">Phosphoprotein</keyword>
<keyword id="KW-1267">Proteomics identification</keyword>
<keyword id="KW-1185">Reference proteome</keyword>
<keyword id="KW-0677">Repeat</keyword>
<keyword id="KW-0808">Transferase</keyword>
<keyword id="KW-0812">Transmembrane</keyword>
<keyword id="KW-1133">Transmembrane helix</keyword>
<sequence length="750" mass="84214">MPPATGGGLAESELRPRRGRCGPQAARAAGRDVAAEAVARSPKRPAWGSRRFEAVGWWALLALVTLLSFATRFHRLDEPPHICWDETHFGKMGSYYINRTFFFDVHPPLGKMLIGLAGYLSGYDGTFLFQKPGDKYEHHSYMGMRGFCAFLGSWLVPFAYLTVLDLSKSLSAALLTAALLTFDTGCLTLSQYILLDPILMFFIMAAMLSMVKYNSCADRPFSAPWWFWLSLTGVSLAGALGVKFVGLFIILQVGLNTIADLWYLFGDLSLSLVTVGKHLTARVLCLIVLPLALYTATFAVHFMVLSKSGPGDGFFSSAFQARLSGNNLHNASIPEHLAYGSVITVKNLRMAIGYLHSHRHLYPEGIGARQQQVTTYLHKDYNNLWIIKKHNTNSDPLDPSFPVEFVRHGDIIRLEHKETSRNLHSHYHEAPMTRKHYQVTGYGINGTGDSNDFWRIEVVNRKFGNRIKVLRSRIRFIHLVTGCVLGSSGKVLPKWGWEQLEVTCTPYLKETLNSIWNVEDHINPKLPNISLDVLQPSFPEILLESHMVMIRGNSGLKPKDNEFTSKPWHWPINYQGLRFSGVNDTDFRVYLLGNPVVWWLNLLSIALYLLSGSIIAVAMQRGARLPAEVAGLSQVLLRGGGQVLLGWTLHYFPFFLMGRVLYFHHYFPAMLFSSMLTGILWDTLLRLCAWGLASWPLARGIHVAGILSLLLGTAYSFYLFHPLAYGMVGPLAQDPQSPMAGLRWLDSWDF</sequence>
<name>POMT2_HUMAN</name>
<gene>
    <name type="primary">POMT2</name>
</gene>
<accession>Q9UKY4</accession>
<accession>Q9NSG6</accession>
<accession>Q9P1W0</accession>
<accession>Q9P1W2</accession>
<evidence type="ECO:0000255" key="1"/>
<evidence type="ECO:0000255" key="2">
    <source>
        <dbReference type="PROSITE-ProRule" id="PRU00131"/>
    </source>
</evidence>
<evidence type="ECO:0000256" key="3">
    <source>
        <dbReference type="SAM" id="MobiDB-lite"/>
    </source>
</evidence>
<evidence type="ECO:0000269" key="4">
    <source>
    </source>
</evidence>
<evidence type="ECO:0000269" key="5">
    <source>
    </source>
</evidence>
<evidence type="ECO:0000269" key="6">
    <source>
    </source>
</evidence>
<evidence type="ECO:0000269" key="7">
    <source>
    </source>
</evidence>
<evidence type="ECO:0000269" key="8">
    <source>
    </source>
</evidence>
<evidence type="ECO:0000269" key="9">
    <source>
    </source>
</evidence>
<evidence type="ECO:0000269" key="10">
    <source>
    </source>
</evidence>
<evidence type="ECO:0000269" key="11">
    <source>
    </source>
</evidence>
<evidence type="ECO:0000269" key="12">
    <source>
    </source>
</evidence>
<evidence type="ECO:0000269" key="13">
    <source>
    </source>
</evidence>
<evidence type="ECO:0000269" key="14">
    <source>
    </source>
</evidence>
<evidence type="ECO:0000303" key="15">
    <source ref="2"/>
</evidence>
<evidence type="ECO:0000305" key="16"/>
<evidence type="ECO:0007744" key="17">
    <source>
    </source>
</evidence>
<comment type="function">
    <text evidence="5 14">Transfers mannosyl residues to the hydroxyl group of serine or threonine residues. Coexpression of both POMT1 and POMT2 is necessary for enzyme activity, expression of either POMT1 or POMT2 alone is insufficient (PubMed:14699049, PubMed:28512129). Essentially dedicated to O-mannosylation of alpha-DAG1 and few other proteins but not of cadherins and protocaherins (PubMed:28512129).</text>
</comment>
<comment type="catalytic activity">
    <reaction evidence="5 14">
        <text>a di-trans,poly-cis-dolichyl beta-D-mannosyl phosphate + L-seryl-[protein] = 3-O-(alpha-D-mannosyl)-L-seryl-[protein] + a di-trans,poly-cis-dolichyl phosphate + H(+)</text>
        <dbReference type="Rhea" id="RHEA:17377"/>
        <dbReference type="Rhea" id="RHEA-COMP:9863"/>
        <dbReference type="Rhea" id="RHEA-COMP:13546"/>
        <dbReference type="Rhea" id="RHEA-COMP:19498"/>
        <dbReference type="Rhea" id="RHEA-COMP:19501"/>
        <dbReference type="ChEBI" id="CHEBI:15378"/>
        <dbReference type="ChEBI" id="CHEBI:29999"/>
        <dbReference type="ChEBI" id="CHEBI:57683"/>
        <dbReference type="ChEBI" id="CHEBI:58211"/>
        <dbReference type="ChEBI" id="CHEBI:137321"/>
        <dbReference type="EC" id="2.4.1.109"/>
    </reaction>
</comment>
<comment type="catalytic activity">
    <reaction evidence="5 14">
        <text>a di-trans,poly-cis-dolichyl beta-D-mannosyl phosphate + L-threonyl-[protein] = 3-O-(alpha-D-mannosyl)-L-threonyl-[protein] + a di-trans,poly-cis-dolichyl phosphate + H(+)</text>
        <dbReference type="Rhea" id="RHEA:53396"/>
        <dbReference type="Rhea" id="RHEA-COMP:11060"/>
        <dbReference type="Rhea" id="RHEA-COMP:13547"/>
        <dbReference type="Rhea" id="RHEA-COMP:19498"/>
        <dbReference type="Rhea" id="RHEA-COMP:19501"/>
        <dbReference type="ChEBI" id="CHEBI:15378"/>
        <dbReference type="ChEBI" id="CHEBI:30013"/>
        <dbReference type="ChEBI" id="CHEBI:57683"/>
        <dbReference type="ChEBI" id="CHEBI:58211"/>
        <dbReference type="ChEBI" id="CHEBI:137323"/>
        <dbReference type="EC" id="2.4.1.109"/>
    </reaction>
</comment>
<comment type="activity regulation">
    <text evidence="5">Slightly activated by Mg(2+) and inhibited by both Ca(+) and Mn(2+). EDTA ha no effect on activity in vitro.</text>
</comment>
<comment type="pathway">
    <text>Protein modification; protein glycosylation.</text>
</comment>
<comment type="subunit">
    <text evidence="16">Interacts with POMT1.</text>
</comment>
<comment type="subcellular location">
    <subcellularLocation>
        <location evidence="4 5">Endoplasmic reticulum membrane</location>
        <topology evidence="4 5">Multi-pass membrane protein</topology>
    </subcellularLocation>
</comment>
<comment type="alternative products">
    <event type="alternative splicing"/>
    <isoform>
        <id>Q9UKY4-1</id>
        <name>1</name>
        <sequence type="displayed"/>
    </isoform>
    <isoform>
        <id>Q9UKY4-2</id>
        <name>2</name>
        <sequence type="described" ref="VSP_041457"/>
    </isoform>
</comment>
<comment type="tissue specificity">
    <text>Highly expressed in testis; detected at low levels in most tissues.</text>
</comment>
<comment type="PTM">
    <text evidence="4">N-glycosylated.</text>
</comment>
<comment type="disease" evidence="6 7 9 11 13">
    <disease id="DI-02954">
        <name>Muscular dystrophy-dystroglycanopathy congenital with brain and eye anomalies A2</name>
        <acronym>MDDGA2</acronym>
        <description>An autosomal recessive disorder characterized by congenital muscular dystrophy associated with cobblestone lissencephaly and other brain anomalies, eye malformations, profound intellectual disability, and death usually in the first years of life. Included diseases are the more severe Walker-Warburg syndrome and the slightly less severe muscle-eye-brain disease.</description>
        <dbReference type="MIM" id="613150"/>
    </disease>
    <text>The disease is caused by variants affecting the gene represented in this entry.</text>
</comment>
<comment type="disease" evidence="8 12">
    <disease id="DI-02955">
        <name>Muscular dystrophy-dystroglycanopathy congenital with impaired intellectual development B2</name>
        <acronym>MDDGB2</acronym>
        <description>An autosomal recessive disorder characterized by congenital muscular dystrophy associated with intellectual disability and mild structural brain abnormalities.</description>
        <dbReference type="MIM" id="613156"/>
    </disease>
    <text>The disease is caused by variants affecting the gene represented in this entry.</text>
</comment>
<comment type="disease" evidence="9 10">
    <disease id="DI-02956">
        <name>Muscular dystrophy-dystroglycanopathy limb-girdle C2</name>
        <acronym>MDDGC2</acronym>
        <description>An autosomal recessive muscular dystrophy with onset after ambulation is achieved. MDDGC2 is characterized by increased serum creatine kinase and mild muscle weakness. Muscle biopsy shows dystrophic changes, inflammatory changes, and severely decreased alpha-dystroglycan. Cognition is normal.</description>
        <dbReference type="MIM" id="613158"/>
    </disease>
    <text>The disease is caused by variants affecting the gene represented in this entry.</text>
</comment>
<comment type="miscellaneous">
    <molecule>Isoform 2</molecule>
    <text evidence="16">May be produced at very low levels due to a premature stop codon in the mRNA, leading to nonsense-mediated mRNA decay.</text>
</comment>
<comment type="similarity">
    <text evidence="16">Belongs to the glycosyltransferase 39 family.</text>
</comment>
<comment type="sequence caution" evidence="16">
    <conflict type="erroneous translation">
        <sequence resource="EMBL-CDS" id="CAD62348"/>
    </conflict>
    <text>Wrong choice of frame.</text>
</comment>
<protein>
    <recommendedName>
        <fullName>Protein O-mannosyl-transferase 2</fullName>
        <ecNumber evidence="5 14">2.4.1.109</ecNumber>
    </recommendedName>
    <alternativeName>
        <fullName>Dolichyl-phosphate-mannose--protein mannosyltransferase 2</fullName>
    </alternativeName>
</protein>
<organism>
    <name type="scientific">Homo sapiens</name>
    <name type="common">Human</name>
    <dbReference type="NCBI Taxonomy" id="9606"/>
    <lineage>
        <taxon>Eukaryota</taxon>
        <taxon>Metazoa</taxon>
        <taxon>Chordata</taxon>
        <taxon>Craniata</taxon>
        <taxon>Vertebrata</taxon>
        <taxon>Euteleostomi</taxon>
        <taxon>Mammalia</taxon>
        <taxon>Eutheria</taxon>
        <taxon>Euarchontoglires</taxon>
        <taxon>Primates</taxon>
        <taxon>Haplorrhini</taxon>
        <taxon>Catarrhini</taxon>
        <taxon>Hominidae</taxon>
        <taxon>Homo</taxon>
    </lineage>
</organism>
<feature type="chain" id="PRO_0000121488" description="Protein O-mannosyl-transferase 2">
    <location>
        <begin position="1"/>
        <end position="750"/>
    </location>
</feature>
<feature type="transmembrane region" description="Helical" evidence="1">
    <location>
        <begin position="54"/>
        <end position="74"/>
    </location>
</feature>
<feature type="transmembrane region" description="Helical" evidence="1">
    <location>
        <begin position="100"/>
        <end position="120"/>
    </location>
</feature>
<feature type="transmembrane region" description="Helical" evidence="1">
    <location>
        <begin position="146"/>
        <end position="166"/>
    </location>
</feature>
<feature type="transmembrane region" description="Helical" evidence="1">
    <location>
        <begin position="191"/>
        <end position="211"/>
    </location>
</feature>
<feature type="transmembrane region" description="Helical" evidence="1">
    <location>
        <begin position="231"/>
        <end position="251"/>
    </location>
</feature>
<feature type="transmembrane region" description="Helical" evidence="1">
    <location>
        <begin position="283"/>
        <end position="303"/>
    </location>
</feature>
<feature type="transmembrane region" description="Helical" evidence="1">
    <location>
        <begin position="596"/>
        <end position="616"/>
    </location>
</feature>
<feature type="transmembrane region" description="Helical" evidence="1">
    <location>
        <begin position="643"/>
        <end position="663"/>
    </location>
</feature>
<feature type="transmembrane region" description="Helical" evidence="1">
    <location>
        <begin position="665"/>
        <end position="685"/>
    </location>
</feature>
<feature type="transmembrane region" description="Helical" evidence="1">
    <location>
        <begin position="700"/>
        <end position="720"/>
    </location>
</feature>
<feature type="domain" description="MIR 1" evidence="2">
    <location>
        <begin position="334"/>
        <end position="390"/>
    </location>
</feature>
<feature type="domain" description="MIR 2" evidence="2">
    <location>
        <begin position="403"/>
        <end position="459"/>
    </location>
</feature>
<feature type="domain" description="MIR 3" evidence="2">
    <location>
        <begin position="464"/>
        <end position="521"/>
    </location>
</feature>
<feature type="region of interest" description="Disordered" evidence="3">
    <location>
        <begin position="1"/>
        <end position="23"/>
    </location>
</feature>
<feature type="modified residue" description="Phosphoserine" evidence="17">
    <location>
        <position position="41"/>
    </location>
</feature>
<feature type="glycosylation site" description="N-linked (GlcNAc...) asparagine" evidence="1">
    <location>
        <position position="98"/>
    </location>
</feature>
<feature type="glycosylation site" description="N-linked (GlcNAc...) asparagine" evidence="1">
    <location>
        <position position="330"/>
    </location>
</feature>
<feature type="glycosylation site" description="N-linked (GlcNAc...) asparagine" evidence="1">
    <location>
        <position position="445"/>
    </location>
</feature>
<feature type="glycosylation site" description="N-linked (GlcNAc...) asparagine" evidence="1">
    <location>
        <position position="528"/>
    </location>
</feature>
<feature type="glycosylation site" description="N-linked (GlcNAc...) asparagine" evidence="1">
    <location>
        <position position="583"/>
    </location>
</feature>
<feature type="splice variant" id="VSP_041457" description="In isoform 2." evidence="15">
    <location>
        <begin position="83"/>
        <end position="750"/>
    </location>
</feature>
<feature type="sequence variant" id="VAR_022083" description="In dbSNP:rs8177536.">
    <original>A</original>
    <variation>E</variation>
    <location>
        <position position="54"/>
    </location>
</feature>
<feature type="sequence variant" id="VAR_065037" description="In MDDGC2; dbSNP:rs267606971." evidence="9 10">
    <original>T</original>
    <variation>M</variation>
    <location>
        <position position="184"/>
    </location>
</feature>
<feature type="sequence variant" id="VAR_065038" description="In MDDGA2; dbSNP:rs267606972." evidence="9">
    <original>I</original>
    <variation>N</variation>
    <location>
        <position position="198"/>
    </location>
</feature>
<feature type="sequence variant" id="VAR_065039" description="In MDDGB2; dbSNP:rs267606966." evidence="12">
    <original>G</original>
    <variation>D</variation>
    <location>
        <position position="246"/>
    </location>
</feature>
<feature type="sequence variant" id="VAR_065040" description="In MDDGA2; dbSNP:rs267606970." evidence="7 12">
    <original>G</original>
    <variation>S</variation>
    <location>
        <position position="353"/>
    </location>
</feature>
<feature type="sequence variant" id="VAR_065041" description="In MDDGA2; dbSNP:rs267606965." evidence="9">
    <original>V</original>
    <variation>F</variation>
    <location>
        <position position="373"/>
    </location>
</feature>
<feature type="sequence variant" id="VAR_065042" description="In MDDGA2; dbSNP:rs190285831." evidence="9">
    <original>R</original>
    <variation>P</variation>
    <location>
        <position position="413"/>
    </location>
</feature>
<feature type="sequence variant" id="VAR_065043" description="In MDDGA2." evidence="11">
    <original>IN</original>
    <variation>LLWQ</variation>
    <location>
        <begin position="444"/>
        <end position="445"/>
    </location>
</feature>
<feature type="sequence variant" id="VAR_068968" description="In MDDGA2; dbSNP:rs765346043." evidence="13">
    <original>H</original>
    <variation>R</variation>
    <location>
        <position position="478"/>
    </location>
</feature>
<feature type="sequence variant" id="VAR_065044" description="In MDDGA2; dbSNP:rs267606968." evidence="11">
    <original>G</original>
    <variation>V</variation>
    <location>
        <position position="482"/>
    </location>
</feature>
<feature type="sequence variant" id="VAR_065045" description="In MDDGB2 and MDDGA2; dbSNP:rs200198778." evidence="8 9 11 12">
    <original>Y</original>
    <variation>C</variation>
    <location>
        <position position="666"/>
    </location>
</feature>
<feature type="sequence variant" id="VAR_065046" description="In MDDGB2.">
    <original>F</original>
    <variation>S</variation>
    <location>
        <position position="717"/>
    </location>
</feature>
<feature type="sequence variant" id="VAR_065047" description="In MDDGA2 and MDDGB2; dbSNP:rs267606969." evidence="7 12">
    <original>G</original>
    <variation>E</variation>
    <location>
        <position position="726"/>
    </location>
</feature>
<feature type="sequence variant" id="VAR_065048" description="In MDDGB2; dbSNP:rs267606964." evidence="8">
    <original>W</original>
    <variation>R</variation>
    <location>
        <position position="748"/>
    </location>
</feature>
<feature type="sequence variant" id="VAR_065049" description="In MDDGC2; dbSNP:rs267606967." evidence="9">
    <original>W</original>
    <variation>S</variation>
    <location>
        <position position="748"/>
    </location>
</feature>
<feature type="sequence conflict" description="In Ref. 1; AAF14118/AAM12046." evidence="16" ref="1">
    <original>E</original>
    <variation>Q</variation>
    <location>
        <position position="53"/>
    </location>
</feature>
<proteinExistence type="evidence at protein level"/>